<reference key="1">
    <citation type="journal article" date="2011" name="J. Bacteriol.">
        <title>Genome sequence of Thermotoga sp. strain RQ2, a hyperthermophilic bacterium isolated from a geothermally heated region of the seafloor near Ribeira Quente, the Azores.</title>
        <authorList>
            <person name="Swithers K.S."/>
            <person name="DiPippo J.L."/>
            <person name="Bruce D.C."/>
            <person name="Detter C."/>
            <person name="Tapia R."/>
            <person name="Han S."/>
            <person name="Saunders E."/>
            <person name="Goodwin L.A."/>
            <person name="Han J."/>
            <person name="Woyke T."/>
            <person name="Pitluck S."/>
            <person name="Pennacchio L."/>
            <person name="Nolan M."/>
            <person name="Mikhailova N."/>
            <person name="Lykidis A."/>
            <person name="Land M.L."/>
            <person name="Brettin T."/>
            <person name="Stetter K.O."/>
            <person name="Nelson K.E."/>
            <person name="Gogarten J.P."/>
            <person name="Noll K.M."/>
        </authorList>
    </citation>
    <scope>NUCLEOTIDE SEQUENCE [LARGE SCALE GENOMIC DNA]</scope>
    <source>
        <strain>RQ2</strain>
    </source>
</reference>
<accession>B1LBM8</accession>
<gene>
    <name evidence="1" type="primary">rplE</name>
    <name type="ordered locus">TRQ2_1382</name>
</gene>
<sequence length="184" mass="21279">MRYEYVPLKDQYEKEIVPALMKEFNYKNIHQVPKLVKIVINMGIGEGSRNYDLIERHANELAKITGQKPIVTRARKSISNFKIRKGMPIGLKVTLRGARMYNFLYKLINIVLPKVRDFRGLDPNSFDGRGNYSFGLSEQLVFPELSPDEVRRIQGMDITIVTTAKTDQEARRLLELFGMPFKRG</sequence>
<comment type="function">
    <text evidence="1">This is one of the proteins that bind and probably mediate the attachment of the 5S RNA into the large ribosomal subunit, where it forms part of the central protuberance. In the 70S ribosome it contacts protein S13 of the 30S subunit (bridge B1b), connecting the 2 subunits; this bridge is implicated in subunit movement. Contacts the P site tRNA; the 5S rRNA and some of its associated proteins might help stabilize positioning of ribosome-bound tRNAs.</text>
</comment>
<comment type="subunit">
    <text evidence="1">Part of the 50S ribosomal subunit; part of the 5S rRNA/L5/L18/L25 subcomplex. Contacts the 5S rRNA and the P site tRNA. Forms a bridge to the 30S subunit in the 70S ribosome.</text>
</comment>
<comment type="similarity">
    <text evidence="1">Belongs to the universal ribosomal protein uL5 family.</text>
</comment>
<feature type="chain" id="PRO_1000142467" description="Large ribosomal subunit protein uL5">
    <location>
        <begin position="1"/>
        <end position="184"/>
    </location>
</feature>
<name>RL5_THESQ</name>
<keyword id="KW-0687">Ribonucleoprotein</keyword>
<keyword id="KW-0689">Ribosomal protein</keyword>
<keyword id="KW-0694">RNA-binding</keyword>
<keyword id="KW-0699">rRNA-binding</keyword>
<keyword id="KW-0820">tRNA-binding</keyword>
<organism>
    <name type="scientific">Thermotoga sp. (strain RQ2)</name>
    <dbReference type="NCBI Taxonomy" id="126740"/>
    <lineage>
        <taxon>Bacteria</taxon>
        <taxon>Thermotogati</taxon>
        <taxon>Thermotogota</taxon>
        <taxon>Thermotogae</taxon>
        <taxon>Thermotogales</taxon>
        <taxon>Thermotogaceae</taxon>
        <taxon>Thermotoga</taxon>
    </lineage>
</organism>
<proteinExistence type="inferred from homology"/>
<protein>
    <recommendedName>
        <fullName evidence="1">Large ribosomal subunit protein uL5</fullName>
    </recommendedName>
    <alternativeName>
        <fullName evidence="2">50S ribosomal protein L5</fullName>
    </alternativeName>
</protein>
<dbReference type="EMBL" id="CP000969">
    <property type="protein sequence ID" value="ACB09726.1"/>
    <property type="molecule type" value="Genomic_DNA"/>
</dbReference>
<dbReference type="RefSeq" id="WP_008195012.1">
    <property type="nucleotide sequence ID" value="NC_010483.1"/>
</dbReference>
<dbReference type="SMR" id="B1LBM8"/>
<dbReference type="KEGG" id="trq:TRQ2_1382"/>
<dbReference type="HOGENOM" id="CLU_061015_2_1_0"/>
<dbReference type="Proteomes" id="UP000001687">
    <property type="component" value="Chromosome"/>
</dbReference>
<dbReference type="GO" id="GO:1990904">
    <property type="term" value="C:ribonucleoprotein complex"/>
    <property type="evidence" value="ECO:0007669"/>
    <property type="project" value="UniProtKB-KW"/>
</dbReference>
<dbReference type="GO" id="GO:0005840">
    <property type="term" value="C:ribosome"/>
    <property type="evidence" value="ECO:0007669"/>
    <property type="project" value="UniProtKB-KW"/>
</dbReference>
<dbReference type="GO" id="GO:0019843">
    <property type="term" value="F:rRNA binding"/>
    <property type="evidence" value="ECO:0007669"/>
    <property type="project" value="UniProtKB-UniRule"/>
</dbReference>
<dbReference type="GO" id="GO:0003735">
    <property type="term" value="F:structural constituent of ribosome"/>
    <property type="evidence" value="ECO:0007669"/>
    <property type="project" value="InterPro"/>
</dbReference>
<dbReference type="GO" id="GO:0000049">
    <property type="term" value="F:tRNA binding"/>
    <property type="evidence" value="ECO:0007669"/>
    <property type="project" value="UniProtKB-UniRule"/>
</dbReference>
<dbReference type="GO" id="GO:0006412">
    <property type="term" value="P:translation"/>
    <property type="evidence" value="ECO:0007669"/>
    <property type="project" value="UniProtKB-UniRule"/>
</dbReference>
<dbReference type="FunFam" id="3.30.1440.10:FF:000001">
    <property type="entry name" value="50S ribosomal protein L5"/>
    <property type="match status" value="1"/>
</dbReference>
<dbReference type="Gene3D" id="3.30.1440.10">
    <property type="match status" value="1"/>
</dbReference>
<dbReference type="HAMAP" id="MF_01333_B">
    <property type="entry name" value="Ribosomal_uL5_B"/>
    <property type="match status" value="1"/>
</dbReference>
<dbReference type="InterPro" id="IPR002132">
    <property type="entry name" value="Ribosomal_uL5"/>
</dbReference>
<dbReference type="InterPro" id="IPR020930">
    <property type="entry name" value="Ribosomal_uL5_bac-type"/>
</dbReference>
<dbReference type="InterPro" id="IPR031309">
    <property type="entry name" value="Ribosomal_uL5_C"/>
</dbReference>
<dbReference type="InterPro" id="IPR020929">
    <property type="entry name" value="Ribosomal_uL5_CS"/>
</dbReference>
<dbReference type="InterPro" id="IPR022803">
    <property type="entry name" value="Ribosomal_uL5_dom_sf"/>
</dbReference>
<dbReference type="InterPro" id="IPR031310">
    <property type="entry name" value="Ribosomal_uL5_N"/>
</dbReference>
<dbReference type="NCBIfam" id="NF000585">
    <property type="entry name" value="PRK00010.1"/>
    <property type="match status" value="1"/>
</dbReference>
<dbReference type="PANTHER" id="PTHR11994">
    <property type="entry name" value="60S RIBOSOMAL PROTEIN L11-RELATED"/>
    <property type="match status" value="1"/>
</dbReference>
<dbReference type="Pfam" id="PF00281">
    <property type="entry name" value="Ribosomal_L5"/>
    <property type="match status" value="1"/>
</dbReference>
<dbReference type="Pfam" id="PF00673">
    <property type="entry name" value="Ribosomal_L5_C"/>
    <property type="match status" value="1"/>
</dbReference>
<dbReference type="PIRSF" id="PIRSF002161">
    <property type="entry name" value="Ribosomal_L5"/>
    <property type="match status" value="1"/>
</dbReference>
<dbReference type="SUPFAM" id="SSF55282">
    <property type="entry name" value="RL5-like"/>
    <property type="match status" value="1"/>
</dbReference>
<dbReference type="PROSITE" id="PS00358">
    <property type="entry name" value="RIBOSOMAL_L5"/>
    <property type="match status" value="1"/>
</dbReference>
<evidence type="ECO:0000255" key="1">
    <source>
        <dbReference type="HAMAP-Rule" id="MF_01333"/>
    </source>
</evidence>
<evidence type="ECO:0000305" key="2"/>